<dbReference type="EC" id="2.1.2.1" evidence="1"/>
<dbReference type="EMBL" id="AP009324">
    <property type="protein sequence ID" value="BAF78980.1"/>
    <property type="molecule type" value="Genomic_DNA"/>
</dbReference>
<dbReference type="RefSeq" id="WP_000120494.1">
    <property type="nucleotide sequence ID" value="NZ_CTYB01000015.1"/>
</dbReference>
<dbReference type="SMR" id="A7X4V7"/>
<dbReference type="KEGG" id="saw:SAHV_2097"/>
<dbReference type="HOGENOM" id="CLU_022477_2_1_9"/>
<dbReference type="UniPathway" id="UPA00193"/>
<dbReference type="UniPathway" id="UPA00288">
    <property type="reaction ID" value="UER01023"/>
</dbReference>
<dbReference type="GO" id="GO:0005829">
    <property type="term" value="C:cytosol"/>
    <property type="evidence" value="ECO:0007669"/>
    <property type="project" value="TreeGrafter"/>
</dbReference>
<dbReference type="GO" id="GO:0004372">
    <property type="term" value="F:glycine hydroxymethyltransferase activity"/>
    <property type="evidence" value="ECO:0007669"/>
    <property type="project" value="UniProtKB-UniRule"/>
</dbReference>
<dbReference type="GO" id="GO:0030170">
    <property type="term" value="F:pyridoxal phosphate binding"/>
    <property type="evidence" value="ECO:0007669"/>
    <property type="project" value="UniProtKB-UniRule"/>
</dbReference>
<dbReference type="GO" id="GO:0019264">
    <property type="term" value="P:glycine biosynthetic process from serine"/>
    <property type="evidence" value="ECO:0007669"/>
    <property type="project" value="UniProtKB-UniRule"/>
</dbReference>
<dbReference type="GO" id="GO:0035999">
    <property type="term" value="P:tetrahydrofolate interconversion"/>
    <property type="evidence" value="ECO:0007669"/>
    <property type="project" value="UniProtKB-UniRule"/>
</dbReference>
<dbReference type="CDD" id="cd00378">
    <property type="entry name" value="SHMT"/>
    <property type="match status" value="1"/>
</dbReference>
<dbReference type="FunFam" id="3.40.640.10:FF:000001">
    <property type="entry name" value="Serine hydroxymethyltransferase"/>
    <property type="match status" value="1"/>
</dbReference>
<dbReference type="FunFam" id="3.90.1150.10:FF:000003">
    <property type="entry name" value="Serine hydroxymethyltransferase"/>
    <property type="match status" value="1"/>
</dbReference>
<dbReference type="Gene3D" id="3.90.1150.10">
    <property type="entry name" value="Aspartate Aminotransferase, domain 1"/>
    <property type="match status" value="1"/>
</dbReference>
<dbReference type="Gene3D" id="3.40.640.10">
    <property type="entry name" value="Type I PLP-dependent aspartate aminotransferase-like (Major domain)"/>
    <property type="match status" value="1"/>
</dbReference>
<dbReference type="HAMAP" id="MF_00051">
    <property type="entry name" value="SHMT"/>
    <property type="match status" value="1"/>
</dbReference>
<dbReference type="InterPro" id="IPR015424">
    <property type="entry name" value="PyrdxlP-dep_Trfase"/>
</dbReference>
<dbReference type="InterPro" id="IPR015421">
    <property type="entry name" value="PyrdxlP-dep_Trfase_major"/>
</dbReference>
<dbReference type="InterPro" id="IPR015422">
    <property type="entry name" value="PyrdxlP-dep_Trfase_small"/>
</dbReference>
<dbReference type="InterPro" id="IPR001085">
    <property type="entry name" value="Ser_HO-MeTrfase"/>
</dbReference>
<dbReference type="InterPro" id="IPR049943">
    <property type="entry name" value="Ser_HO-MeTrfase-like"/>
</dbReference>
<dbReference type="InterPro" id="IPR019798">
    <property type="entry name" value="Ser_HO-MeTrfase_PLP_BS"/>
</dbReference>
<dbReference type="InterPro" id="IPR039429">
    <property type="entry name" value="SHMT-like_dom"/>
</dbReference>
<dbReference type="NCBIfam" id="NF000586">
    <property type="entry name" value="PRK00011.1"/>
    <property type="match status" value="1"/>
</dbReference>
<dbReference type="PANTHER" id="PTHR11680">
    <property type="entry name" value="SERINE HYDROXYMETHYLTRANSFERASE"/>
    <property type="match status" value="1"/>
</dbReference>
<dbReference type="PANTHER" id="PTHR11680:SF35">
    <property type="entry name" value="SERINE HYDROXYMETHYLTRANSFERASE 1"/>
    <property type="match status" value="1"/>
</dbReference>
<dbReference type="Pfam" id="PF00464">
    <property type="entry name" value="SHMT"/>
    <property type="match status" value="1"/>
</dbReference>
<dbReference type="PIRSF" id="PIRSF000412">
    <property type="entry name" value="SHMT"/>
    <property type="match status" value="1"/>
</dbReference>
<dbReference type="SUPFAM" id="SSF53383">
    <property type="entry name" value="PLP-dependent transferases"/>
    <property type="match status" value="1"/>
</dbReference>
<dbReference type="PROSITE" id="PS00096">
    <property type="entry name" value="SHMT"/>
    <property type="match status" value="1"/>
</dbReference>
<gene>
    <name evidence="1" type="primary">glyA</name>
    <name type="ordered locus">SAHV_2097</name>
</gene>
<name>GLYA_STAA1</name>
<keyword id="KW-0028">Amino-acid biosynthesis</keyword>
<keyword id="KW-0963">Cytoplasm</keyword>
<keyword id="KW-0554">One-carbon metabolism</keyword>
<keyword id="KW-0663">Pyridoxal phosphate</keyword>
<keyword id="KW-0808">Transferase</keyword>
<accession>A7X4V7</accession>
<sequence>MSYITKQDKVIAEAIEREFQRQNSNIELIASENFVSEAVMEAQGSVLTNKYAEGYPGRRYYGGCEFVDVTESIAIDRAKALFGAEHVNVQPHSGSQANMAVYLVALEMGDTVLGMNLSHGGHLTHGAPVNFSGKFYNFVEYGVDKDTERINYDEVRKLALEHKPKLIVAGASAYSRTIDFKKFKEIADEVNAKLMVDMAHIAGLVAAGLHPNPVEYADFVTTTTHKTLRGPRGGMILCKEEYKKDIDKTIFPGIQGGPLEHVIAAKAVAFGEALENNFKTYQQQVVKNAKVLAEALINEGFRIVSGGTDNHLVAVDVKGSIGLTGKEAEETLDSVGITCNKNTIPFDQEKPFVTSGIRLGTPAATTRGFDEKAFEEVAKIISLALKNSKDEEKLQQAKERVAKLTAEYPLYQ</sequence>
<organism>
    <name type="scientific">Staphylococcus aureus (strain Mu3 / ATCC 700698)</name>
    <dbReference type="NCBI Taxonomy" id="418127"/>
    <lineage>
        <taxon>Bacteria</taxon>
        <taxon>Bacillati</taxon>
        <taxon>Bacillota</taxon>
        <taxon>Bacilli</taxon>
        <taxon>Bacillales</taxon>
        <taxon>Staphylococcaceae</taxon>
        <taxon>Staphylococcus</taxon>
    </lineage>
</organism>
<evidence type="ECO:0000255" key="1">
    <source>
        <dbReference type="HAMAP-Rule" id="MF_00051"/>
    </source>
</evidence>
<protein>
    <recommendedName>
        <fullName evidence="1">Serine hydroxymethyltransferase</fullName>
        <shortName evidence="1">SHMT</shortName>
        <shortName evidence="1">Serine methylase</shortName>
        <ecNumber evidence="1">2.1.2.1</ecNumber>
    </recommendedName>
</protein>
<feature type="chain" id="PRO_1000006325" description="Serine hydroxymethyltransferase">
    <location>
        <begin position="1"/>
        <end position="412"/>
    </location>
</feature>
<feature type="binding site" evidence="1">
    <location>
        <position position="117"/>
    </location>
    <ligand>
        <name>(6S)-5,6,7,8-tetrahydrofolate</name>
        <dbReference type="ChEBI" id="CHEBI:57453"/>
    </ligand>
</feature>
<feature type="binding site" evidence="1">
    <location>
        <begin position="121"/>
        <end position="123"/>
    </location>
    <ligand>
        <name>(6S)-5,6,7,8-tetrahydrofolate</name>
        <dbReference type="ChEBI" id="CHEBI:57453"/>
    </ligand>
</feature>
<feature type="site" description="Plays an important role in substrate specificity" evidence="1">
    <location>
        <position position="225"/>
    </location>
</feature>
<feature type="modified residue" description="N6-(pyridoxal phosphate)lysine" evidence="1">
    <location>
        <position position="226"/>
    </location>
</feature>
<comment type="function">
    <text evidence="1">Catalyzes the reversible interconversion of serine and glycine with tetrahydrofolate (THF) serving as the one-carbon carrier. This reaction serves as the major source of one-carbon groups required for the biosynthesis of purines, thymidylate, methionine, and other important biomolecules. Also exhibits THF-independent aldolase activity toward beta-hydroxyamino acids, producing glycine and aldehydes, via a retro-aldol mechanism.</text>
</comment>
<comment type="catalytic activity">
    <reaction evidence="1">
        <text>(6R)-5,10-methylene-5,6,7,8-tetrahydrofolate + glycine + H2O = (6S)-5,6,7,8-tetrahydrofolate + L-serine</text>
        <dbReference type="Rhea" id="RHEA:15481"/>
        <dbReference type="ChEBI" id="CHEBI:15377"/>
        <dbReference type="ChEBI" id="CHEBI:15636"/>
        <dbReference type="ChEBI" id="CHEBI:33384"/>
        <dbReference type="ChEBI" id="CHEBI:57305"/>
        <dbReference type="ChEBI" id="CHEBI:57453"/>
        <dbReference type="EC" id="2.1.2.1"/>
    </reaction>
</comment>
<comment type="cofactor">
    <cofactor evidence="1">
        <name>pyridoxal 5'-phosphate</name>
        <dbReference type="ChEBI" id="CHEBI:597326"/>
    </cofactor>
</comment>
<comment type="pathway">
    <text evidence="1">One-carbon metabolism; tetrahydrofolate interconversion.</text>
</comment>
<comment type="pathway">
    <text evidence="1">Amino-acid biosynthesis; glycine biosynthesis; glycine from L-serine: step 1/1.</text>
</comment>
<comment type="subunit">
    <text evidence="1">Homodimer.</text>
</comment>
<comment type="subcellular location">
    <subcellularLocation>
        <location evidence="1">Cytoplasm</location>
    </subcellularLocation>
</comment>
<comment type="similarity">
    <text evidence="1">Belongs to the SHMT family.</text>
</comment>
<proteinExistence type="inferred from homology"/>
<reference key="1">
    <citation type="journal article" date="2008" name="Antimicrob. Agents Chemother.">
        <title>Mutated response regulator graR is responsible for phenotypic conversion of Staphylococcus aureus from heterogeneous vancomycin-intermediate resistance to vancomycin-intermediate resistance.</title>
        <authorList>
            <person name="Neoh H.-M."/>
            <person name="Cui L."/>
            <person name="Yuzawa H."/>
            <person name="Takeuchi F."/>
            <person name="Matsuo M."/>
            <person name="Hiramatsu K."/>
        </authorList>
    </citation>
    <scope>NUCLEOTIDE SEQUENCE [LARGE SCALE GENOMIC DNA]</scope>
    <source>
        <strain>Mu3 / ATCC 700698</strain>
    </source>
</reference>